<dbReference type="EMBL" id="S58435">
    <property type="protein sequence ID" value="AAB26143.1"/>
    <property type="molecule type" value="Genomic_RNA"/>
</dbReference>
<dbReference type="PIR" id="C48556">
    <property type="entry name" value="C48556"/>
</dbReference>
<dbReference type="IntAct" id="P35977">
    <property type="interactions" value="1"/>
</dbReference>
<dbReference type="MINT" id="P35977"/>
<dbReference type="Proteomes" id="UP000007775">
    <property type="component" value="Genome"/>
</dbReference>
<dbReference type="GO" id="GO:0044161">
    <property type="term" value="C:host cell cytoplasmic vesicle"/>
    <property type="evidence" value="ECO:0007669"/>
    <property type="project" value="UniProtKB-SubCell"/>
</dbReference>
<dbReference type="GO" id="GO:0042025">
    <property type="term" value="C:host cell nucleus"/>
    <property type="evidence" value="ECO:0007669"/>
    <property type="project" value="UniProtKB-SubCell"/>
</dbReference>
<dbReference type="InterPro" id="IPR003875">
    <property type="entry name" value="Paramyxovir_NSC"/>
</dbReference>
<dbReference type="Pfam" id="PF02725">
    <property type="entry name" value="Paramyxo_NS_C"/>
    <property type="match status" value="1"/>
</dbReference>
<name>C_MEASA</name>
<organismHost>
    <name type="scientific">Homo sapiens</name>
    <name type="common">Human</name>
    <dbReference type="NCBI Taxonomy" id="9606"/>
</organismHost>
<keyword id="KW-1036">Host cytoplasmic vesicle</keyword>
<keyword id="KW-1048">Host nucleus</keyword>
<evidence type="ECO:0000250" key="1">
    <source>
        <dbReference type="UniProtKB" id="Q9YZN9"/>
    </source>
</evidence>
<evidence type="ECO:0000256" key="2">
    <source>
        <dbReference type="SAM" id="MobiDB-lite"/>
    </source>
</evidence>
<evidence type="ECO:0000305" key="3"/>
<protein>
    <recommendedName>
        <fullName>Protein C</fullName>
    </recommendedName>
</protein>
<proteinExistence type="evidence at protein level"/>
<sequence length="186" mass="21113">MSKTDWNASGLSRPSPSAHWPSRKLWQHGQKYQTTQDRSEPPAGKRRQAVRVSANHASQQLDQLKAVHLASAVRDLERAMTTLKLWESPQEISRHQALGYSVIMFMITAVKRLRESKMLTLSWFNQALMVIAPYQEETMNLKTAMWILANLIPRDMLSLTGDLLPSLWGSGLLMLKLQKEGRSTSS</sequence>
<organism>
    <name type="scientific">Measles virus (strain Edmonston-AIK-C vaccine)</name>
    <name type="common">MeV</name>
    <name type="synonym">Subacute sclerose panencephalitis virus</name>
    <dbReference type="NCBI Taxonomy" id="36408"/>
    <lineage>
        <taxon>Viruses</taxon>
        <taxon>Riboviria</taxon>
        <taxon>Orthornavirae</taxon>
        <taxon>Negarnaviricota</taxon>
        <taxon>Haploviricotina</taxon>
        <taxon>Monjiviricetes</taxon>
        <taxon>Mononegavirales</taxon>
        <taxon>Paramyxoviridae</taxon>
        <taxon>Orthoparamyxovirinae</taxon>
        <taxon>Morbillivirus</taxon>
        <taxon>Morbillivirus hominis</taxon>
        <taxon>Measles morbillivirus</taxon>
    </lineage>
</organism>
<reference key="1">
    <citation type="journal article" date="1993" name="Virus Genes">
        <title>Molecular cloning and complete nucleotide sequence of genomic RNA of the AIK-C strain of attenuated measles virus.</title>
        <authorList>
            <person name="Mori T."/>
            <person name="Sasaki K."/>
            <person name="Hashimoto H."/>
            <person name="Makino S."/>
        </authorList>
    </citation>
    <scope>NUCLEOTIDE SEQUENCE [GENOMIC RNA]</scope>
</reference>
<comment type="function">
    <text evidence="1">Ribonucleocapsid-associated protein that interacts with the phosphoprotein (P), thereby increasing replication accuracy and processivity of the polymerase complex.</text>
</comment>
<comment type="subunit">
    <text evidence="1">Interacts with the phosphoprotein (via C-terminus); this interaction allows C to associate with the ribonucleocapsid.</text>
</comment>
<comment type="interaction">
    <interactant intactId="EBI-8848155">
        <id>P35977</id>
    </interactant>
    <interactant intactId="EBI-646245">
        <id>Q60680</id>
        <label>Chuk</label>
    </interactant>
    <organismsDiffer>true</organismsDiffer>
    <experiments>2</experiments>
</comment>
<comment type="subcellular location">
    <subcellularLocation>
        <location evidence="1">Host nucleus</location>
    </subcellularLocation>
    <subcellularLocation>
        <location evidence="1">Host cytoplasmic vesicle</location>
    </subcellularLocation>
    <text evidence="1">Relocalizes from the nucleus to the inclusion bodies in the presence of P.</text>
</comment>
<comment type="similarity">
    <text evidence="3">Belongs to the morbillivirus protein C family.</text>
</comment>
<accession>P35977</accession>
<feature type="chain" id="PRO_0000142793" description="Protein C">
    <location>
        <begin position="1"/>
        <end position="186"/>
    </location>
</feature>
<feature type="region of interest" description="Disordered" evidence="2">
    <location>
        <begin position="1"/>
        <end position="44"/>
    </location>
</feature>
<feature type="compositionally biased region" description="Polar residues" evidence="2">
    <location>
        <begin position="1"/>
        <end position="15"/>
    </location>
</feature>
<gene>
    <name type="primary">P/V/C</name>
</gene>